<sequence length="211" mass="22337">MTSLAVLLTLADSRLPTGAHVHSGGIEEAIAAGLVTGLATLEAFLKRRVRTHGLLTASIAAAVHRGELAVDDADRETDARTPAPAARHASRSQGRGLIRLARRVWPDSGWEELGPRPHLAVVAGRVGALSGLAPEHNALHLVYITMTGSAIAAQRLLALDPAEVTVVTFQLSELCEQIAQEATAGLADLSDPLLDTLAQRHDERVRPLFVS</sequence>
<feature type="chain" id="PRO_1000145122" description="Urease accessory protein UreF">
    <location>
        <begin position="1"/>
        <end position="211"/>
    </location>
</feature>
<feature type="region of interest" description="Disordered" evidence="2">
    <location>
        <begin position="71"/>
        <end position="93"/>
    </location>
</feature>
<organism>
    <name type="scientific">Mycobacterium bovis (strain BCG / Pasteur 1173P2)</name>
    <dbReference type="NCBI Taxonomy" id="410289"/>
    <lineage>
        <taxon>Bacteria</taxon>
        <taxon>Bacillati</taxon>
        <taxon>Actinomycetota</taxon>
        <taxon>Actinomycetes</taxon>
        <taxon>Mycobacteriales</taxon>
        <taxon>Mycobacteriaceae</taxon>
        <taxon>Mycobacterium</taxon>
        <taxon>Mycobacterium tuberculosis complex</taxon>
    </lineage>
</organism>
<protein>
    <recommendedName>
        <fullName evidence="1">Urease accessory protein UreF</fullName>
    </recommendedName>
</protein>
<comment type="function">
    <text evidence="1">Required for maturation of urease via the functional incorporation of the urease nickel metallocenter.</text>
</comment>
<comment type="subunit">
    <text evidence="1">UreD, UreF and UreG form a complex that acts as a GTP-hydrolysis-dependent molecular chaperone, activating the urease apoprotein by helping to assemble the nickel containing metallocenter of UreC. The UreE protein probably delivers the nickel.</text>
</comment>
<comment type="subcellular location">
    <subcellularLocation>
        <location evidence="1">Cytoplasm</location>
    </subcellularLocation>
</comment>
<comment type="similarity">
    <text evidence="1">Belongs to the UreF family.</text>
</comment>
<evidence type="ECO:0000255" key="1">
    <source>
        <dbReference type="HAMAP-Rule" id="MF_01385"/>
    </source>
</evidence>
<evidence type="ECO:0000256" key="2">
    <source>
        <dbReference type="SAM" id="MobiDB-lite"/>
    </source>
</evidence>
<dbReference type="EMBL" id="AM408590">
    <property type="protein sequence ID" value="CAL71874.1"/>
    <property type="molecule type" value="Genomic_DNA"/>
</dbReference>
<dbReference type="RefSeq" id="WP_010950619.1">
    <property type="nucleotide sequence ID" value="NC_008769.1"/>
</dbReference>
<dbReference type="SMR" id="A1KJR3"/>
<dbReference type="KEGG" id="mbb:BCG_1887"/>
<dbReference type="HOGENOM" id="CLU_049215_3_0_11"/>
<dbReference type="Proteomes" id="UP000001472">
    <property type="component" value="Chromosome"/>
</dbReference>
<dbReference type="GO" id="GO:0005737">
    <property type="term" value="C:cytoplasm"/>
    <property type="evidence" value="ECO:0007669"/>
    <property type="project" value="UniProtKB-SubCell"/>
</dbReference>
<dbReference type="GO" id="GO:0016151">
    <property type="term" value="F:nickel cation binding"/>
    <property type="evidence" value="ECO:0007669"/>
    <property type="project" value="UniProtKB-UniRule"/>
</dbReference>
<dbReference type="Gene3D" id="1.10.4190.10">
    <property type="entry name" value="Urease accessory protein UreF"/>
    <property type="match status" value="1"/>
</dbReference>
<dbReference type="HAMAP" id="MF_01385">
    <property type="entry name" value="UreF"/>
    <property type="match status" value="1"/>
</dbReference>
<dbReference type="InterPro" id="IPR002639">
    <property type="entry name" value="UreF"/>
</dbReference>
<dbReference type="InterPro" id="IPR038277">
    <property type="entry name" value="UreF_sf"/>
</dbReference>
<dbReference type="PANTHER" id="PTHR33620">
    <property type="entry name" value="UREASE ACCESSORY PROTEIN F"/>
    <property type="match status" value="1"/>
</dbReference>
<dbReference type="PANTHER" id="PTHR33620:SF1">
    <property type="entry name" value="UREASE ACCESSORY PROTEIN F"/>
    <property type="match status" value="1"/>
</dbReference>
<dbReference type="Pfam" id="PF01730">
    <property type="entry name" value="UreF"/>
    <property type="match status" value="1"/>
</dbReference>
<dbReference type="PIRSF" id="PIRSF009467">
    <property type="entry name" value="Ureas_acces_UreF"/>
    <property type="match status" value="1"/>
</dbReference>
<reference key="1">
    <citation type="journal article" date="2007" name="Proc. Natl. Acad. Sci. U.S.A.">
        <title>Genome plasticity of BCG and impact on vaccine efficacy.</title>
        <authorList>
            <person name="Brosch R."/>
            <person name="Gordon S.V."/>
            <person name="Garnier T."/>
            <person name="Eiglmeier K."/>
            <person name="Frigui W."/>
            <person name="Valenti P."/>
            <person name="Dos Santos S."/>
            <person name="Duthoy S."/>
            <person name="Lacroix C."/>
            <person name="Garcia-Pelayo C."/>
            <person name="Inwald J.K."/>
            <person name="Golby P."/>
            <person name="Garcia J.N."/>
            <person name="Hewinson R.G."/>
            <person name="Behr M.A."/>
            <person name="Quail M.A."/>
            <person name="Churcher C."/>
            <person name="Barrell B.G."/>
            <person name="Parkhill J."/>
            <person name="Cole S.T."/>
        </authorList>
    </citation>
    <scope>NUCLEOTIDE SEQUENCE [LARGE SCALE GENOMIC DNA]</scope>
    <source>
        <strain>BCG / Pasteur 1173P2</strain>
    </source>
</reference>
<proteinExistence type="inferred from homology"/>
<gene>
    <name evidence="1" type="primary">ureF</name>
    <name type="ordered locus">BCG_1887</name>
</gene>
<accession>A1KJR3</accession>
<keyword id="KW-0143">Chaperone</keyword>
<keyword id="KW-0963">Cytoplasm</keyword>
<keyword id="KW-0996">Nickel insertion</keyword>
<name>UREF_MYCBP</name>